<protein>
    <recommendedName>
        <fullName>Uncharacterized protein B354L</fullName>
        <shortName>pB354L</shortName>
    </recommendedName>
</protein>
<evidence type="ECO:0000305" key="1"/>
<organismHost>
    <name type="scientific">Ornithodoros</name>
    <name type="common">relapsing fever ticks</name>
    <dbReference type="NCBI Taxonomy" id="6937"/>
</organismHost>
<organismHost>
    <name type="scientific">Phacochoerus aethiopicus</name>
    <name type="common">Warthog</name>
    <dbReference type="NCBI Taxonomy" id="85517"/>
</organismHost>
<organismHost>
    <name type="scientific">Phacochoerus africanus</name>
    <name type="common">Warthog</name>
    <dbReference type="NCBI Taxonomy" id="41426"/>
</organismHost>
<organismHost>
    <name type="scientific">Potamochoerus larvatus</name>
    <name type="common">Bushpig</name>
    <dbReference type="NCBI Taxonomy" id="273792"/>
</organismHost>
<organismHost>
    <name type="scientific">Sus scrofa</name>
    <name type="common">Pig</name>
    <dbReference type="NCBI Taxonomy" id="9823"/>
</organismHost>
<proteinExistence type="inferred from homology"/>
<comment type="similarity">
    <text evidence="1">Belongs to the asfivirus B354L family.</text>
</comment>
<organism>
    <name type="scientific">African swine fever virus (isolate Pig/Kenya/KEN-50/1950)</name>
    <name type="common">ASFV</name>
    <dbReference type="NCBI Taxonomy" id="561445"/>
    <lineage>
        <taxon>Viruses</taxon>
        <taxon>Varidnaviria</taxon>
        <taxon>Bamfordvirae</taxon>
        <taxon>Nucleocytoviricota</taxon>
        <taxon>Pokkesviricetes</taxon>
        <taxon>Asfuvirales</taxon>
        <taxon>Asfarviridae</taxon>
        <taxon>Asfivirus</taxon>
        <taxon>African swine fever virus</taxon>
    </lineage>
</organism>
<name>VF354_ASFK5</name>
<feature type="chain" id="PRO_0000373663" description="Uncharacterized protein B354L">
    <location>
        <begin position="1"/>
        <end position="354"/>
    </location>
</feature>
<dbReference type="EMBL" id="AY261360">
    <property type="status" value="NOT_ANNOTATED_CDS"/>
    <property type="molecule type" value="Genomic_DNA"/>
</dbReference>
<dbReference type="Proteomes" id="UP000000861">
    <property type="component" value="Segment"/>
</dbReference>
<dbReference type="InterPro" id="IPR027417">
    <property type="entry name" value="P-loop_NTPase"/>
</dbReference>
<dbReference type="SUPFAM" id="SSF52540">
    <property type="entry name" value="P-loop containing nucleoside triphosphate hydrolases"/>
    <property type="match status" value="1"/>
</dbReference>
<gene>
    <name type="ordered locus">Ken-090</name>
</gene>
<reference key="1">
    <citation type="submission" date="2003-03" db="EMBL/GenBank/DDBJ databases">
        <title>African swine fever virus genomes.</title>
        <authorList>
            <person name="Kutish G.F."/>
            <person name="Rock D.L."/>
        </authorList>
    </citation>
    <scope>NUCLEOTIDE SEQUENCE [LARGE SCALE GENOMIC DNA]</scope>
</reference>
<accession>P0CAF3</accession>
<sequence length="354" mass="41695">MALTTPSGKLIPELQFKAHHFIDKTTVLYGPSKTGKTVYVKHIMKILQPHIEQILVVAPSEPSNRSYEGFVHPTLIHYRLWLADKQKKNDNKGAERFLEAIWQRQTMMSSIYSRVNNIDMLKTLYHKLPIDIQQKENKNIAKVECLKAEQTDQKKEEKITSLYQQLLKKIIIQNIHMYKNLSLTEDEKFTLNYINLNPRLLLILDDCAAELHPLFTKEIFKKFFYQNRHCFISMIICCQDDTDLPANLRKNAFVSIFTNASICMSNFSRQSNRYSKQDKEYVEEISHIVFKGYRKLVYIREDEYRQHFYHSTVPLPTAFSFGSKALLKLCKAVYSKEVVIDKSNPYWSKFRLNF</sequence>